<name>RPOB_YERE8</name>
<organism>
    <name type="scientific">Yersinia enterocolitica serotype O:8 / biotype 1B (strain NCTC 13174 / 8081)</name>
    <dbReference type="NCBI Taxonomy" id="393305"/>
    <lineage>
        <taxon>Bacteria</taxon>
        <taxon>Pseudomonadati</taxon>
        <taxon>Pseudomonadota</taxon>
        <taxon>Gammaproteobacteria</taxon>
        <taxon>Enterobacterales</taxon>
        <taxon>Yersiniaceae</taxon>
        <taxon>Yersinia</taxon>
    </lineage>
</organism>
<sequence length="1342" mass="150459">MVYSYTEKKRIRKDFGKRPQVLDIPYLLSIQLDSFQKFIEQDPEGQYGLEAAFRSVFPIQSYSGNSELQYVSYRLGEPVFDVKECQIRGVTYSAPLRVKLRLVIYEREAPEGTVKDIKEQEVYMGEIPLMTENGTFVINGTERVIVSQLHRSPGVFFDSDKGKTHSSGKVLYNARIIPYRGSWLDFEFDPKDNLFVRIDRRRKLPATIILRALNFTTAQILDLFFEKVVFEIRDNKLQMELVPERLRGETASFDIEANGKVYVEKARRITARHIRQLEKDGIDRIEVPVEYIAGKVVAKDYIDENTGELICAANMELSLDLLAKLSQAGHKQIETLFTNDLDHSAYISETLRVDPTSDRLSALVEIYRMMRPGEPPTREAAENLFENLFFSEDRYDLSAVGRMKFNRSLLRDEIEGSGILSKEDITEVMKKLIDIRNGKGEVDDIDHLGNRRIRSVGEMAENQFRVGLVRVERAVKERLSLGDLDTLMPQDMINAKPISAAVKEFFGSSQLSQFMDQNNPLSEITHKRRISALGPGGLTRERAGFEVRDVHPTHYGRVCPIETPEGPNIGLINSLSVYAQTNEYGFLETPYRRVRDGVVTDEINYLSAIEEGNFVIAQANSNLDEDGRFIEDLVTCRSKGESSLFSRDQVDYMDVSTQQVVSVGASLIPFLEHDDANRALMGANMQRQAVPTLRADKPLVGTGMERAVAVDSGVTSVAKRGGTVQYVDASRIVIKVNEDEMYPGEAGIDIYNLTKYTRSNQNTCINQMPCVNLGEPIERGDVLADGPSTDLGELALGQNMRVAFMPWNGYNFEDSILVSERVVQEDRFTTIHIQELACVSRDTKLGPEEITADIPNVGEAALSKLDESGIVYIGAEVTGGDILVGKVTPKGETQLTPEEKLLRAIFGEKASDVKDSSLRVPNGVSGTVIDVQVFTRDGVEKDKRALEIEEMQLKQAKKDLTEELQILEAGLFARIHAVLVSGGIEADKLSKLPRDRWLELGLTDEDKQNQLEQLAEQYDEMKSEFEKKMDAKRRKITQGDDLAPGVLKIVKVYLAVKRQIQPGDKMAGRHGNKGVISKINPIEDMPYDENGTPVDIVLNPLGVPSRMNIGQILETHLGMAAKGIGEKINAMLKKQEEVAKLREFIQKAYDLGDSVCQKVDLSTFTDDEVLRLAENLKKGMPIATPVFDGATEKEIKELLQLGGLPTSGQITLFDGRTGEQFERQVTVGYMYMLKLNHLVDDKMHARSTGSYSLVTQQPLGGKAQFGGQRFGEMEVWALEAYGAAYTLQEMLTVKSDDVNGRTKMYKNIVDGDHRMEPGMPESFNVLLKEIRSLGINIELEEE</sequence>
<feature type="chain" id="PRO_0000300425" description="DNA-directed RNA polymerase subunit beta">
    <location>
        <begin position="1"/>
        <end position="1342"/>
    </location>
</feature>
<protein>
    <recommendedName>
        <fullName evidence="1">DNA-directed RNA polymerase subunit beta</fullName>
        <shortName evidence="1">RNAP subunit beta</shortName>
        <ecNumber evidence="1">2.7.7.6</ecNumber>
    </recommendedName>
    <alternativeName>
        <fullName evidence="1">RNA polymerase subunit beta</fullName>
    </alternativeName>
    <alternativeName>
        <fullName evidence="1">Transcriptase subunit beta</fullName>
    </alternativeName>
</protein>
<gene>
    <name evidence="1" type="primary">rpoB</name>
    <name type="ordered locus">YE0286</name>
</gene>
<dbReference type="EC" id="2.7.7.6" evidence="1"/>
<dbReference type="EMBL" id="AM286415">
    <property type="protein sequence ID" value="CAL10418.1"/>
    <property type="molecule type" value="Genomic_DNA"/>
</dbReference>
<dbReference type="RefSeq" id="WP_011815382.1">
    <property type="nucleotide sequence ID" value="NC_008800.1"/>
</dbReference>
<dbReference type="RefSeq" id="YP_001004668.1">
    <property type="nucleotide sequence ID" value="NC_008800.1"/>
</dbReference>
<dbReference type="SMR" id="A1JII0"/>
<dbReference type="KEGG" id="yen:YE0286"/>
<dbReference type="PATRIC" id="fig|393305.7.peg.378"/>
<dbReference type="eggNOG" id="COG0085">
    <property type="taxonomic scope" value="Bacteria"/>
</dbReference>
<dbReference type="HOGENOM" id="CLU_000524_4_0_6"/>
<dbReference type="OrthoDB" id="9803954at2"/>
<dbReference type="Proteomes" id="UP000000642">
    <property type="component" value="Chromosome"/>
</dbReference>
<dbReference type="GO" id="GO:0000428">
    <property type="term" value="C:DNA-directed RNA polymerase complex"/>
    <property type="evidence" value="ECO:0007669"/>
    <property type="project" value="UniProtKB-KW"/>
</dbReference>
<dbReference type="GO" id="GO:0003677">
    <property type="term" value="F:DNA binding"/>
    <property type="evidence" value="ECO:0007669"/>
    <property type="project" value="UniProtKB-UniRule"/>
</dbReference>
<dbReference type="GO" id="GO:0003899">
    <property type="term" value="F:DNA-directed RNA polymerase activity"/>
    <property type="evidence" value="ECO:0007669"/>
    <property type="project" value="UniProtKB-UniRule"/>
</dbReference>
<dbReference type="GO" id="GO:0032549">
    <property type="term" value="F:ribonucleoside binding"/>
    <property type="evidence" value="ECO:0007669"/>
    <property type="project" value="InterPro"/>
</dbReference>
<dbReference type="GO" id="GO:0006351">
    <property type="term" value="P:DNA-templated transcription"/>
    <property type="evidence" value="ECO:0007669"/>
    <property type="project" value="UniProtKB-UniRule"/>
</dbReference>
<dbReference type="CDD" id="cd00653">
    <property type="entry name" value="RNA_pol_B_RPB2"/>
    <property type="match status" value="1"/>
</dbReference>
<dbReference type="FunFam" id="2.30.150.10:FF:000001">
    <property type="entry name" value="DNA-directed RNA polymerase subunit beta"/>
    <property type="match status" value="1"/>
</dbReference>
<dbReference type="FunFam" id="2.40.270.10:FF:000003">
    <property type="entry name" value="DNA-directed RNA polymerase subunit beta"/>
    <property type="match status" value="1"/>
</dbReference>
<dbReference type="FunFam" id="2.40.270.10:FF:000004">
    <property type="entry name" value="DNA-directed RNA polymerase subunit beta"/>
    <property type="match status" value="1"/>
</dbReference>
<dbReference type="FunFam" id="2.40.50.100:FF:000006">
    <property type="entry name" value="DNA-directed RNA polymerase subunit beta"/>
    <property type="match status" value="1"/>
</dbReference>
<dbReference type="FunFam" id="2.40.50.150:FF:000001">
    <property type="entry name" value="DNA-directed RNA polymerase subunit beta"/>
    <property type="match status" value="1"/>
</dbReference>
<dbReference type="FunFam" id="3.90.1100.10:FF:000002">
    <property type="entry name" value="DNA-directed RNA polymerase subunit beta"/>
    <property type="match status" value="1"/>
</dbReference>
<dbReference type="FunFam" id="3.90.1110.10:FF:000001">
    <property type="entry name" value="DNA-directed RNA polymerase subunit beta"/>
    <property type="match status" value="1"/>
</dbReference>
<dbReference type="FunFam" id="3.90.1110.10:FF:000004">
    <property type="entry name" value="DNA-directed RNA polymerase subunit beta"/>
    <property type="match status" value="1"/>
</dbReference>
<dbReference type="FunFam" id="3.90.1800.10:FF:000001">
    <property type="entry name" value="DNA-directed RNA polymerase subunit beta"/>
    <property type="match status" value="1"/>
</dbReference>
<dbReference type="Gene3D" id="2.40.50.100">
    <property type="match status" value="1"/>
</dbReference>
<dbReference type="Gene3D" id="2.40.50.150">
    <property type="match status" value="1"/>
</dbReference>
<dbReference type="Gene3D" id="3.90.1100.10">
    <property type="match status" value="2"/>
</dbReference>
<dbReference type="Gene3D" id="2.30.150.10">
    <property type="entry name" value="DNA-directed RNA polymerase, beta subunit, external 1 domain"/>
    <property type="match status" value="1"/>
</dbReference>
<dbReference type="Gene3D" id="2.40.270.10">
    <property type="entry name" value="DNA-directed RNA polymerase, subunit 2, domain 6"/>
    <property type="match status" value="2"/>
</dbReference>
<dbReference type="Gene3D" id="3.90.1800.10">
    <property type="entry name" value="RNA polymerase alpha subunit dimerisation domain"/>
    <property type="match status" value="1"/>
</dbReference>
<dbReference type="Gene3D" id="3.90.1110.10">
    <property type="entry name" value="RNA polymerase Rpb2, domain 2"/>
    <property type="match status" value="2"/>
</dbReference>
<dbReference type="HAMAP" id="MF_01321">
    <property type="entry name" value="RNApol_bact_RpoB"/>
    <property type="match status" value="1"/>
</dbReference>
<dbReference type="InterPro" id="IPR042107">
    <property type="entry name" value="DNA-dir_RNA_pol_bsu_ext_1_sf"/>
</dbReference>
<dbReference type="InterPro" id="IPR019462">
    <property type="entry name" value="DNA-dir_RNA_pol_bsu_external_1"/>
</dbReference>
<dbReference type="InterPro" id="IPR015712">
    <property type="entry name" value="DNA-dir_RNA_pol_su2"/>
</dbReference>
<dbReference type="InterPro" id="IPR007120">
    <property type="entry name" value="DNA-dir_RNAP_su2_dom"/>
</dbReference>
<dbReference type="InterPro" id="IPR037033">
    <property type="entry name" value="DNA-dir_RNAP_su2_hyb_sf"/>
</dbReference>
<dbReference type="InterPro" id="IPR010243">
    <property type="entry name" value="RNA_pol_bsu_bac"/>
</dbReference>
<dbReference type="InterPro" id="IPR007121">
    <property type="entry name" value="RNA_pol_bsu_CS"/>
</dbReference>
<dbReference type="InterPro" id="IPR007644">
    <property type="entry name" value="RNA_pol_bsu_protrusion"/>
</dbReference>
<dbReference type="InterPro" id="IPR007642">
    <property type="entry name" value="RNA_pol_Rpb2_2"/>
</dbReference>
<dbReference type="InterPro" id="IPR037034">
    <property type="entry name" value="RNA_pol_Rpb2_2_sf"/>
</dbReference>
<dbReference type="InterPro" id="IPR007645">
    <property type="entry name" value="RNA_pol_Rpb2_3"/>
</dbReference>
<dbReference type="InterPro" id="IPR007641">
    <property type="entry name" value="RNA_pol_Rpb2_7"/>
</dbReference>
<dbReference type="InterPro" id="IPR014724">
    <property type="entry name" value="RNA_pol_RPB2_OB-fold"/>
</dbReference>
<dbReference type="NCBIfam" id="NF001616">
    <property type="entry name" value="PRK00405.1"/>
    <property type="match status" value="1"/>
</dbReference>
<dbReference type="NCBIfam" id="TIGR02013">
    <property type="entry name" value="rpoB"/>
    <property type="match status" value="1"/>
</dbReference>
<dbReference type="PANTHER" id="PTHR20856">
    <property type="entry name" value="DNA-DIRECTED RNA POLYMERASE I SUBUNIT 2"/>
    <property type="match status" value="1"/>
</dbReference>
<dbReference type="Pfam" id="PF04563">
    <property type="entry name" value="RNA_pol_Rpb2_1"/>
    <property type="match status" value="1"/>
</dbReference>
<dbReference type="Pfam" id="PF04561">
    <property type="entry name" value="RNA_pol_Rpb2_2"/>
    <property type="match status" value="2"/>
</dbReference>
<dbReference type="Pfam" id="PF04565">
    <property type="entry name" value="RNA_pol_Rpb2_3"/>
    <property type="match status" value="1"/>
</dbReference>
<dbReference type="Pfam" id="PF10385">
    <property type="entry name" value="RNA_pol_Rpb2_45"/>
    <property type="match status" value="1"/>
</dbReference>
<dbReference type="Pfam" id="PF00562">
    <property type="entry name" value="RNA_pol_Rpb2_6"/>
    <property type="match status" value="1"/>
</dbReference>
<dbReference type="Pfam" id="PF04560">
    <property type="entry name" value="RNA_pol_Rpb2_7"/>
    <property type="match status" value="1"/>
</dbReference>
<dbReference type="SUPFAM" id="SSF64484">
    <property type="entry name" value="beta and beta-prime subunits of DNA dependent RNA-polymerase"/>
    <property type="match status" value="1"/>
</dbReference>
<dbReference type="PROSITE" id="PS01166">
    <property type="entry name" value="RNA_POL_BETA"/>
    <property type="match status" value="1"/>
</dbReference>
<comment type="function">
    <text evidence="1">DNA-dependent RNA polymerase catalyzes the transcription of DNA into RNA using the four ribonucleoside triphosphates as substrates.</text>
</comment>
<comment type="catalytic activity">
    <reaction evidence="1">
        <text>RNA(n) + a ribonucleoside 5'-triphosphate = RNA(n+1) + diphosphate</text>
        <dbReference type="Rhea" id="RHEA:21248"/>
        <dbReference type="Rhea" id="RHEA-COMP:14527"/>
        <dbReference type="Rhea" id="RHEA-COMP:17342"/>
        <dbReference type="ChEBI" id="CHEBI:33019"/>
        <dbReference type="ChEBI" id="CHEBI:61557"/>
        <dbReference type="ChEBI" id="CHEBI:140395"/>
        <dbReference type="EC" id="2.7.7.6"/>
    </reaction>
</comment>
<comment type="subunit">
    <text evidence="1">The RNAP catalytic core consists of 2 alpha, 1 beta, 1 beta' and 1 omega subunit. When a sigma factor is associated with the core the holoenzyme is formed, which can initiate transcription.</text>
</comment>
<comment type="similarity">
    <text evidence="1">Belongs to the RNA polymerase beta chain family.</text>
</comment>
<accession>A1JII0</accession>
<keyword id="KW-0240">DNA-directed RNA polymerase</keyword>
<keyword id="KW-0548">Nucleotidyltransferase</keyword>
<keyword id="KW-0804">Transcription</keyword>
<keyword id="KW-0808">Transferase</keyword>
<proteinExistence type="inferred from homology"/>
<evidence type="ECO:0000255" key="1">
    <source>
        <dbReference type="HAMAP-Rule" id="MF_01321"/>
    </source>
</evidence>
<reference key="1">
    <citation type="journal article" date="2006" name="PLoS Genet.">
        <title>The complete genome sequence and comparative genome analysis of the high pathogenicity Yersinia enterocolitica strain 8081.</title>
        <authorList>
            <person name="Thomson N.R."/>
            <person name="Howard S."/>
            <person name="Wren B.W."/>
            <person name="Holden M.T.G."/>
            <person name="Crossman L."/>
            <person name="Challis G.L."/>
            <person name="Churcher C."/>
            <person name="Mungall K."/>
            <person name="Brooks K."/>
            <person name="Chillingworth T."/>
            <person name="Feltwell T."/>
            <person name="Abdellah Z."/>
            <person name="Hauser H."/>
            <person name="Jagels K."/>
            <person name="Maddison M."/>
            <person name="Moule S."/>
            <person name="Sanders M."/>
            <person name="Whitehead S."/>
            <person name="Quail M.A."/>
            <person name="Dougan G."/>
            <person name="Parkhill J."/>
            <person name="Prentice M.B."/>
        </authorList>
    </citation>
    <scope>NUCLEOTIDE SEQUENCE [LARGE SCALE GENOMIC DNA]</scope>
    <source>
        <strain>NCTC 13174 / 8081</strain>
    </source>
</reference>